<feature type="chain" id="PRO_0000226874" description="Large ribosomal subunit protein bL19">
    <location>
        <begin position="1"/>
        <end position="116"/>
    </location>
</feature>
<keyword id="KW-0002">3D-structure</keyword>
<keyword id="KW-0687">Ribonucleoprotein</keyword>
<keyword id="KW-0689">Ribosomal protein</keyword>
<proteinExistence type="evidence at protein level"/>
<organism>
    <name type="scientific">Staphylococcus aureus (strain bovine RF122 / ET3-1)</name>
    <dbReference type="NCBI Taxonomy" id="273036"/>
    <lineage>
        <taxon>Bacteria</taxon>
        <taxon>Bacillati</taxon>
        <taxon>Bacillota</taxon>
        <taxon>Bacilli</taxon>
        <taxon>Bacillales</taxon>
        <taxon>Staphylococcaceae</taxon>
        <taxon>Staphylococcus</taxon>
    </lineage>
</organism>
<gene>
    <name evidence="1" type="primary">rplS</name>
    <name type="ordered locus">SAB1105</name>
</gene>
<name>RL19_STAAB</name>
<evidence type="ECO:0000255" key="1">
    <source>
        <dbReference type="HAMAP-Rule" id="MF_00402"/>
    </source>
</evidence>
<evidence type="ECO:0000305" key="2"/>
<sequence length="116" mass="13362">MTNHKLIEAVTKSQLRTDLPSFRPGDTLRVHVRIIEGTRERIQVFEGVVIKRRGGGVSETFTVRKISSGVGVERTFPLHTPKIEKIEVKRRGKVRRAKLYYLRSLRGKAARIQEIR</sequence>
<reference key="1">
    <citation type="journal article" date="2007" name="PLoS ONE">
        <title>Molecular correlates of host specialization in Staphylococcus aureus.</title>
        <authorList>
            <person name="Herron-Olson L."/>
            <person name="Fitzgerald J.R."/>
            <person name="Musser J.M."/>
            <person name="Kapur V."/>
        </authorList>
    </citation>
    <scope>NUCLEOTIDE SEQUENCE [LARGE SCALE GENOMIC DNA]</scope>
    <source>
        <strain>bovine RF122 / ET3-1</strain>
    </source>
</reference>
<comment type="function">
    <text evidence="1">This protein is located at the 30S-50S ribosomal subunit interface and may play a role in the structure and function of the aminoacyl-tRNA binding site.</text>
</comment>
<comment type="similarity">
    <text evidence="1">Belongs to the bacterial ribosomal protein bL19 family.</text>
</comment>
<dbReference type="EMBL" id="AJ938182">
    <property type="protein sequence ID" value="CAI80794.1"/>
    <property type="molecule type" value="Genomic_DNA"/>
</dbReference>
<dbReference type="RefSeq" id="WP_000181404.1">
    <property type="nucleotide sequence ID" value="NC_007622.1"/>
</dbReference>
<dbReference type="PDB" id="6FXC">
    <property type="method" value="EM"/>
    <property type="resolution" value="6.76 A"/>
    <property type="chains" value="AN/BN=2-115"/>
</dbReference>
<dbReference type="PDBsum" id="6FXC"/>
<dbReference type="EMDB" id="EMD-0243"/>
<dbReference type="EMDB" id="EMD-3637"/>
<dbReference type="SMR" id="Q2YXM4"/>
<dbReference type="GeneID" id="98345556"/>
<dbReference type="KEGG" id="sab:SAB1105"/>
<dbReference type="HOGENOM" id="CLU_103507_2_1_9"/>
<dbReference type="GO" id="GO:0022625">
    <property type="term" value="C:cytosolic large ribosomal subunit"/>
    <property type="evidence" value="ECO:0007669"/>
    <property type="project" value="TreeGrafter"/>
</dbReference>
<dbReference type="GO" id="GO:0003735">
    <property type="term" value="F:structural constituent of ribosome"/>
    <property type="evidence" value="ECO:0007669"/>
    <property type="project" value="InterPro"/>
</dbReference>
<dbReference type="GO" id="GO:0006412">
    <property type="term" value="P:translation"/>
    <property type="evidence" value="ECO:0007669"/>
    <property type="project" value="UniProtKB-UniRule"/>
</dbReference>
<dbReference type="FunFam" id="2.30.30.790:FF:000001">
    <property type="entry name" value="50S ribosomal protein L19"/>
    <property type="match status" value="1"/>
</dbReference>
<dbReference type="Gene3D" id="2.30.30.790">
    <property type="match status" value="1"/>
</dbReference>
<dbReference type="HAMAP" id="MF_00402">
    <property type="entry name" value="Ribosomal_bL19"/>
    <property type="match status" value="1"/>
</dbReference>
<dbReference type="InterPro" id="IPR001857">
    <property type="entry name" value="Ribosomal_bL19"/>
</dbReference>
<dbReference type="InterPro" id="IPR018257">
    <property type="entry name" value="Ribosomal_bL19_CS"/>
</dbReference>
<dbReference type="InterPro" id="IPR038657">
    <property type="entry name" value="Ribosomal_bL19_sf"/>
</dbReference>
<dbReference type="InterPro" id="IPR008991">
    <property type="entry name" value="Translation_prot_SH3-like_sf"/>
</dbReference>
<dbReference type="NCBIfam" id="TIGR01024">
    <property type="entry name" value="rplS_bact"/>
    <property type="match status" value="1"/>
</dbReference>
<dbReference type="PANTHER" id="PTHR15680:SF9">
    <property type="entry name" value="LARGE RIBOSOMAL SUBUNIT PROTEIN BL19M"/>
    <property type="match status" value="1"/>
</dbReference>
<dbReference type="PANTHER" id="PTHR15680">
    <property type="entry name" value="RIBOSOMAL PROTEIN L19"/>
    <property type="match status" value="1"/>
</dbReference>
<dbReference type="Pfam" id="PF01245">
    <property type="entry name" value="Ribosomal_L19"/>
    <property type="match status" value="1"/>
</dbReference>
<dbReference type="PIRSF" id="PIRSF002191">
    <property type="entry name" value="Ribosomal_L19"/>
    <property type="match status" value="1"/>
</dbReference>
<dbReference type="PRINTS" id="PR00061">
    <property type="entry name" value="RIBOSOMALL19"/>
</dbReference>
<dbReference type="SUPFAM" id="SSF50104">
    <property type="entry name" value="Translation proteins SH3-like domain"/>
    <property type="match status" value="1"/>
</dbReference>
<dbReference type="PROSITE" id="PS01015">
    <property type="entry name" value="RIBOSOMAL_L19"/>
    <property type="match status" value="1"/>
</dbReference>
<accession>Q2YXM4</accession>
<protein>
    <recommendedName>
        <fullName evidence="1">Large ribosomal subunit protein bL19</fullName>
    </recommendedName>
    <alternativeName>
        <fullName evidence="2">50S ribosomal protein L19</fullName>
    </alternativeName>
</protein>